<name>RS9_META3</name>
<dbReference type="EMBL" id="CP000743">
    <property type="protein sequence ID" value="ABR56672.1"/>
    <property type="molecule type" value="Genomic_DNA"/>
</dbReference>
<dbReference type="RefSeq" id="WP_011973804.1">
    <property type="nucleotide sequence ID" value="NC_009635.1"/>
</dbReference>
<dbReference type="SMR" id="A6UW00"/>
<dbReference type="STRING" id="419665.Maeo_1095"/>
<dbReference type="GeneID" id="5327064"/>
<dbReference type="KEGG" id="mae:Maeo_1095"/>
<dbReference type="eggNOG" id="arCOG04243">
    <property type="taxonomic scope" value="Archaea"/>
</dbReference>
<dbReference type="HOGENOM" id="CLU_046483_4_0_2"/>
<dbReference type="OrthoDB" id="52677at2157"/>
<dbReference type="Proteomes" id="UP000001106">
    <property type="component" value="Chromosome"/>
</dbReference>
<dbReference type="GO" id="GO:0022627">
    <property type="term" value="C:cytosolic small ribosomal subunit"/>
    <property type="evidence" value="ECO:0007669"/>
    <property type="project" value="TreeGrafter"/>
</dbReference>
<dbReference type="GO" id="GO:0003723">
    <property type="term" value="F:RNA binding"/>
    <property type="evidence" value="ECO:0007669"/>
    <property type="project" value="TreeGrafter"/>
</dbReference>
<dbReference type="GO" id="GO:0003735">
    <property type="term" value="F:structural constituent of ribosome"/>
    <property type="evidence" value="ECO:0007669"/>
    <property type="project" value="InterPro"/>
</dbReference>
<dbReference type="GO" id="GO:0000462">
    <property type="term" value="P:maturation of SSU-rRNA from tricistronic rRNA transcript (SSU-rRNA, 5.8S rRNA, LSU-rRNA)"/>
    <property type="evidence" value="ECO:0007669"/>
    <property type="project" value="TreeGrafter"/>
</dbReference>
<dbReference type="GO" id="GO:0006412">
    <property type="term" value="P:translation"/>
    <property type="evidence" value="ECO:0007669"/>
    <property type="project" value="UniProtKB-UniRule"/>
</dbReference>
<dbReference type="Gene3D" id="3.30.230.10">
    <property type="match status" value="1"/>
</dbReference>
<dbReference type="HAMAP" id="MF_00532_A">
    <property type="entry name" value="Ribosomal_uS9_A"/>
    <property type="match status" value="1"/>
</dbReference>
<dbReference type="InterPro" id="IPR020568">
    <property type="entry name" value="Ribosomal_Su5_D2-typ_SF"/>
</dbReference>
<dbReference type="InterPro" id="IPR000754">
    <property type="entry name" value="Ribosomal_uS9"/>
</dbReference>
<dbReference type="InterPro" id="IPR019958">
    <property type="entry name" value="Ribosomal_uS9_archaeal"/>
</dbReference>
<dbReference type="InterPro" id="IPR020574">
    <property type="entry name" value="Ribosomal_uS9_CS"/>
</dbReference>
<dbReference type="InterPro" id="IPR014721">
    <property type="entry name" value="Ribsml_uS5_D2-typ_fold_subgr"/>
</dbReference>
<dbReference type="NCBIfam" id="NF001749">
    <property type="entry name" value="PRK00474.1"/>
    <property type="match status" value="1"/>
</dbReference>
<dbReference type="NCBIfam" id="TIGR03627">
    <property type="entry name" value="uS9_arch"/>
    <property type="match status" value="1"/>
</dbReference>
<dbReference type="PANTHER" id="PTHR21569:SF16">
    <property type="entry name" value="RIBOSOMAL PROTEIN S16"/>
    <property type="match status" value="1"/>
</dbReference>
<dbReference type="PANTHER" id="PTHR21569">
    <property type="entry name" value="RIBOSOMAL PROTEIN S9"/>
    <property type="match status" value="1"/>
</dbReference>
<dbReference type="Pfam" id="PF00380">
    <property type="entry name" value="Ribosomal_S9"/>
    <property type="match status" value="1"/>
</dbReference>
<dbReference type="SUPFAM" id="SSF54211">
    <property type="entry name" value="Ribosomal protein S5 domain 2-like"/>
    <property type="match status" value="1"/>
</dbReference>
<dbReference type="PROSITE" id="PS00360">
    <property type="entry name" value="RIBOSOMAL_S9"/>
    <property type="match status" value="1"/>
</dbReference>
<proteinExistence type="inferred from homology"/>
<evidence type="ECO:0000255" key="1">
    <source>
        <dbReference type="HAMAP-Rule" id="MF_00532"/>
    </source>
</evidence>
<evidence type="ECO:0000256" key="2">
    <source>
        <dbReference type="SAM" id="MobiDB-lite"/>
    </source>
</evidence>
<evidence type="ECO:0000305" key="3"/>
<comment type="similarity">
    <text evidence="1">Belongs to the universal ribosomal protein uS9 family.</text>
</comment>
<sequence length="134" mass="14834">MKVVHTVGKRKTAIARATAKEGKGRIRINKKPIEIVEPKYINAKLMEPIILAGDVVDGIDIDITVNGGGIVGQMDAARTALGKAIVEFTGDMELKDRFVHYDRTILISDARRTEPHKPSKSTKGPRAKRQKSYR</sequence>
<keyword id="KW-0687">Ribonucleoprotein</keyword>
<keyword id="KW-0689">Ribosomal protein</keyword>
<feature type="chain" id="PRO_1000061005" description="Small ribosomal subunit protein uS9">
    <location>
        <begin position="1"/>
        <end position="134"/>
    </location>
</feature>
<feature type="region of interest" description="Disordered" evidence="2">
    <location>
        <begin position="109"/>
        <end position="134"/>
    </location>
</feature>
<feature type="compositionally biased region" description="Basic residues" evidence="2">
    <location>
        <begin position="118"/>
        <end position="134"/>
    </location>
</feature>
<accession>A6UW00</accession>
<organism>
    <name type="scientific">Methanococcus aeolicus (strain ATCC BAA-1280 / DSM 17508 / OCM 812 / Nankai-3)</name>
    <dbReference type="NCBI Taxonomy" id="419665"/>
    <lineage>
        <taxon>Archaea</taxon>
        <taxon>Methanobacteriati</taxon>
        <taxon>Methanobacteriota</taxon>
        <taxon>Methanomada group</taxon>
        <taxon>Methanococci</taxon>
        <taxon>Methanococcales</taxon>
        <taxon>Methanococcaceae</taxon>
        <taxon>Methanococcus</taxon>
    </lineage>
</organism>
<gene>
    <name evidence="1" type="primary">rps9</name>
    <name type="ordered locus">Maeo_1095</name>
</gene>
<reference key="1">
    <citation type="submission" date="2007-06" db="EMBL/GenBank/DDBJ databases">
        <title>Complete sequence of Methanococcus aeolicus Nankai-3.</title>
        <authorList>
            <consortium name="US DOE Joint Genome Institute"/>
            <person name="Copeland A."/>
            <person name="Lucas S."/>
            <person name="Lapidus A."/>
            <person name="Barry K."/>
            <person name="Glavina del Rio T."/>
            <person name="Dalin E."/>
            <person name="Tice H."/>
            <person name="Pitluck S."/>
            <person name="Chain P."/>
            <person name="Malfatti S."/>
            <person name="Shin M."/>
            <person name="Vergez L."/>
            <person name="Schmutz J."/>
            <person name="Larimer F."/>
            <person name="Land M."/>
            <person name="Hauser L."/>
            <person name="Kyrpides N."/>
            <person name="Lykidis A."/>
            <person name="Sieprawska-Lupa M."/>
            <person name="Whitman W.B."/>
            <person name="Richardson P."/>
        </authorList>
    </citation>
    <scope>NUCLEOTIDE SEQUENCE [LARGE SCALE GENOMIC DNA]</scope>
    <source>
        <strain>ATCC BAA-1280 / DSM 17508 / OCM 812 / Nankai-3</strain>
    </source>
</reference>
<protein>
    <recommendedName>
        <fullName evidence="1">Small ribosomal subunit protein uS9</fullName>
    </recommendedName>
    <alternativeName>
        <fullName evidence="3">30S ribosomal protein S9</fullName>
    </alternativeName>
</protein>